<keyword id="KW-0378">Hydrolase</keyword>
<keyword id="KW-0460">Magnesium</keyword>
<keyword id="KW-0464">Manganese</keyword>
<keyword id="KW-0472">Membrane</keyword>
<keyword id="KW-0479">Metal-binding</keyword>
<keyword id="KW-0904">Protein phosphatase</keyword>
<keyword id="KW-1185">Reference proteome</keyword>
<keyword id="KW-0812">Transmembrane</keyword>
<keyword id="KW-1133">Transmembrane helix</keyword>
<dbReference type="EC" id="3.1.3.16"/>
<dbReference type="EMBL" id="AC006423">
    <property type="protein sequence ID" value="AAF63109.1"/>
    <property type="molecule type" value="Genomic_DNA"/>
</dbReference>
<dbReference type="EMBL" id="AC022314">
    <property type="protein sequence ID" value="AAF79661.1"/>
    <property type="status" value="ALT_SEQ"/>
    <property type="molecule type" value="Genomic_DNA"/>
</dbReference>
<dbReference type="EMBL" id="CP002684">
    <property type="protein sequence ID" value="AEE32006.1"/>
    <property type="molecule type" value="Genomic_DNA"/>
</dbReference>
<dbReference type="EMBL" id="AY063973">
    <property type="protein sequence ID" value="AAL36329.1"/>
    <property type="molecule type" value="mRNA"/>
</dbReference>
<dbReference type="EMBL" id="AY117193">
    <property type="protein sequence ID" value="AAM51268.1"/>
    <property type="molecule type" value="mRNA"/>
</dbReference>
<dbReference type="RefSeq" id="NP_175057.2">
    <property type="nucleotide sequence ID" value="NM_103517.3"/>
</dbReference>
<dbReference type="SMR" id="Q8VZN9"/>
<dbReference type="BioGRID" id="26214">
    <property type="interactions" value="1"/>
</dbReference>
<dbReference type="FunCoup" id="Q8VZN9">
    <property type="interactions" value="2558"/>
</dbReference>
<dbReference type="IntAct" id="Q8VZN9">
    <property type="interactions" value="1"/>
</dbReference>
<dbReference type="MINT" id="Q8VZN9"/>
<dbReference type="STRING" id="3702.Q8VZN9"/>
<dbReference type="iPTMnet" id="Q8VZN9"/>
<dbReference type="PaxDb" id="3702-AT1G43900.1"/>
<dbReference type="ProteomicsDB" id="248869"/>
<dbReference type="EnsemblPlants" id="AT1G43900.1">
    <property type="protein sequence ID" value="AT1G43900.1"/>
    <property type="gene ID" value="AT1G43900"/>
</dbReference>
<dbReference type="GeneID" id="840989"/>
<dbReference type="Gramene" id="AT1G43900.1">
    <property type="protein sequence ID" value="AT1G43900.1"/>
    <property type="gene ID" value="AT1G43900"/>
</dbReference>
<dbReference type="KEGG" id="ath:AT1G43900"/>
<dbReference type="Araport" id="AT1G43900"/>
<dbReference type="TAIR" id="AT1G43900"/>
<dbReference type="eggNOG" id="KOG0698">
    <property type="taxonomic scope" value="Eukaryota"/>
</dbReference>
<dbReference type="HOGENOM" id="CLU_013173_0_6_1"/>
<dbReference type="InParanoid" id="Q8VZN9"/>
<dbReference type="OMA" id="MEDYYET"/>
<dbReference type="PhylomeDB" id="Q8VZN9"/>
<dbReference type="PRO" id="PR:Q8VZN9"/>
<dbReference type="Proteomes" id="UP000006548">
    <property type="component" value="Chromosome 1"/>
</dbReference>
<dbReference type="ExpressionAtlas" id="Q8VZN9">
    <property type="expression patterns" value="baseline and differential"/>
</dbReference>
<dbReference type="GO" id="GO:0016020">
    <property type="term" value="C:membrane"/>
    <property type="evidence" value="ECO:0007669"/>
    <property type="project" value="UniProtKB-SubCell"/>
</dbReference>
<dbReference type="GO" id="GO:0046872">
    <property type="term" value="F:metal ion binding"/>
    <property type="evidence" value="ECO:0007669"/>
    <property type="project" value="UniProtKB-KW"/>
</dbReference>
<dbReference type="GO" id="GO:0004722">
    <property type="term" value="F:protein serine/threonine phosphatase activity"/>
    <property type="evidence" value="ECO:0007669"/>
    <property type="project" value="UniProtKB-EC"/>
</dbReference>
<dbReference type="CDD" id="cd00143">
    <property type="entry name" value="PP2Cc"/>
    <property type="match status" value="1"/>
</dbReference>
<dbReference type="Gene3D" id="3.60.40.10">
    <property type="entry name" value="PPM-type phosphatase domain"/>
    <property type="match status" value="1"/>
</dbReference>
<dbReference type="InterPro" id="IPR015655">
    <property type="entry name" value="PP2C"/>
</dbReference>
<dbReference type="InterPro" id="IPR000222">
    <property type="entry name" value="PP2C_BS"/>
</dbReference>
<dbReference type="InterPro" id="IPR036457">
    <property type="entry name" value="PPM-type-like_dom_sf"/>
</dbReference>
<dbReference type="InterPro" id="IPR001932">
    <property type="entry name" value="PPM-type_phosphatase-like_dom"/>
</dbReference>
<dbReference type="PANTHER" id="PTHR47992">
    <property type="entry name" value="PROTEIN PHOSPHATASE"/>
    <property type="match status" value="1"/>
</dbReference>
<dbReference type="Pfam" id="PF00481">
    <property type="entry name" value="PP2C"/>
    <property type="match status" value="1"/>
</dbReference>
<dbReference type="SMART" id="SM00332">
    <property type="entry name" value="PP2Cc"/>
    <property type="match status" value="1"/>
</dbReference>
<dbReference type="SUPFAM" id="SSF81606">
    <property type="entry name" value="PP2C-like"/>
    <property type="match status" value="1"/>
</dbReference>
<dbReference type="PROSITE" id="PS01032">
    <property type="entry name" value="PPM_1"/>
    <property type="match status" value="1"/>
</dbReference>
<dbReference type="PROSITE" id="PS51746">
    <property type="entry name" value="PPM_2"/>
    <property type="match status" value="1"/>
</dbReference>
<proteinExistence type="evidence at transcript level"/>
<comment type="catalytic activity">
    <reaction>
        <text>O-phospho-L-seryl-[protein] + H2O = L-seryl-[protein] + phosphate</text>
        <dbReference type="Rhea" id="RHEA:20629"/>
        <dbReference type="Rhea" id="RHEA-COMP:9863"/>
        <dbReference type="Rhea" id="RHEA-COMP:11604"/>
        <dbReference type="ChEBI" id="CHEBI:15377"/>
        <dbReference type="ChEBI" id="CHEBI:29999"/>
        <dbReference type="ChEBI" id="CHEBI:43474"/>
        <dbReference type="ChEBI" id="CHEBI:83421"/>
        <dbReference type="EC" id="3.1.3.16"/>
    </reaction>
</comment>
<comment type="catalytic activity">
    <reaction>
        <text>O-phospho-L-threonyl-[protein] + H2O = L-threonyl-[protein] + phosphate</text>
        <dbReference type="Rhea" id="RHEA:47004"/>
        <dbReference type="Rhea" id="RHEA-COMP:11060"/>
        <dbReference type="Rhea" id="RHEA-COMP:11605"/>
        <dbReference type="ChEBI" id="CHEBI:15377"/>
        <dbReference type="ChEBI" id="CHEBI:30013"/>
        <dbReference type="ChEBI" id="CHEBI:43474"/>
        <dbReference type="ChEBI" id="CHEBI:61977"/>
        <dbReference type="EC" id="3.1.3.16"/>
    </reaction>
</comment>
<comment type="cofactor">
    <cofactor evidence="1">
        <name>Mg(2+)</name>
        <dbReference type="ChEBI" id="CHEBI:18420"/>
    </cofactor>
    <cofactor evidence="1">
        <name>Mn(2+)</name>
        <dbReference type="ChEBI" id="CHEBI:29035"/>
    </cofactor>
    <text evidence="1">Binds 2 magnesium or manganese ions per subunit.</text>
</comment>
<comment type="subcellular location">
    <subcellularLocation>
        <location evidence="5">Membrane</location>
        <topology evidence="5">Single-pass membrane protein</topology>
    </subcellularLocation>
</comment>
<comment type="similarity">
    <text evidence="5">Belongs to the PP2C family.</text>
</comment>
<comment type="sequence caution" evidence="5">
    <conflict type="erroneous gene model prediction">
        <sequence resource="EMBL-CDS" id="AAF79661"/>
    </conflict>
</comment>
<feature type="chain" id="PRO_0000367942" description="Probable protein phosphatase 2C 11">
    <location>
        <begin position="1"/>
        <end position="371"/>
    </location>
</feature>
<feature type="transmembrane region" description="Helical" evidence="2">
    <location>
        <begin position="29"/>
        <end position="49"/>
    </location>
</feature>
<feature type="domain" description="PPM-type phosphatase" evidence="3">
    <location>
        <begin position="123"/>
        <end position="368"/>
    </location>
</feature>
<feature type="region of interest" description="Disordered" evidence="4">
    <location>
        <begin position="67"/>
        <end position="95"/>
    </location>
</feature>
<feature type="compositionally biased region" description="Low complexity" evidence="4">
    <location>
        <begin position="85"/>
        <end position="94"/>
    </location>
</feature>
<feature type="binding site" evidence="1">
    <location>
        <position position="159"/>
    </location>
    <ligand>
        <name>Mn(2+)</name>
        <dbReference type="ChEBI" id="CHEBI:29035"/>
        <label>1</label>
    </ligand>
</feature>
<feature type="binding site" evidence="1">
    <location>
        <position position="159"/>
    </location>
    <ligand>
        <name>Mn(2+)</name>
        <dbReference type="ChEBI" id="CHEBI:29035"/>
        <label>2</label>
    </ligand>
</feature>
<feature type="binding site" evidence="1">
    <location>
        <position position="160"/>
    </location>
    <ligand>
        <name>Mn(2+)</name>
        <dbReference type="ChEBI" id="CHEBI:29035"/>
        <label>1</label>
    </ligand>
</feature>
<feature type="binding site" evidence="1">
    <location>
        <position position="320"/>
    </location>
    <ligand>
        <name>Mn(2+)</name>
        <dbReference type="ChEBI" id="CHEBI:29035"/>
        <label>2</label>
    </ligand>
</feature>
<feature type="binding site" evidence="1">
    <location>
        <position position="359"/>
    </location>
    <ligand>
        <name>Mn(2+)</name>
        <dbReference type="ChEBI" id="CHEBI:29035"/>
        <label>2</label>
    </ligand>
</feature>
<organism>
    <name type="scientific">Arabidopsis thaliana</name>
    <name type="common">Mouse-ear cress</name>
    <dbReference type="NCBI Taxonomy" id="3702"/>
    <lineage>
        <taxon>Eukaryota</taxon>
        <taxon>Viridiplantae</taxon>
        <taxon>Streptophyta</taxon>
        <taxon>Embryophyta</taxon>
        <taxon>Tracheophyta</taxon>
        <taxon>Spermatophyta</taxon>
        <taxon>Magnoliopsida</taxon>
        <taxon>eudicotyledons</taxon>
        <taxon>Gunneridae</taxon>
        <taxon>Pentapetalae</taxon>
        <taxon>rosids</taxon>
        <taxon>malvids</taxon>
        <taxon>Brassicales</taxon>
        <taxon>Brassicaceae</taxon>
        <taxon>Camelineae</taxon>
        <taxon>Arabidopsis</taxon>
    </lineage>
</organism>
<protein>
    <recommendedName>
        <fullName>Probable protein phosphatase 2C 11</fullName>
        <shortName>AtPP2C11</shortName>
        <ecNumber>3.1.3.16</ecNumber>
    </recommendedName>
</protein>
<evidence type="ECO:0000250" key="1"/>
<evidence type="ECO:0000255" key="2"/>
<evidence type="ECO:0000255" key="3">
    <source>
        <dbReference type="PROSITE-ProRule" id="PRU01082"/>
    </source>
</evidence>
<evidence type="ECO:0000256" key="4">
    <source>
        <dbReference type="SAM" id="MobiDB-lite"/>
    </source>
</evidence>
<evidence type="ECO:0000305" key="5"/>
<gene>
    <name type="ordered locus">At1g43900</name>
    <name type="ORF">F28H19.16</name>
    <name type="ORF">F9C16.6</name>
</gene>
<accession>Q8VZN9</accession>
<accession>Q9LP12</accession>
<accession>Q9MAQ8</accession>
<sequence>MKKTRNVASSPIECVHLQTKPTTTLVRSFFFFLFNSQTISSFIIFYLFLCSFFWFCQSPNLTNPSPPPLSVAPLRGDANSPPPESSSSPATKSSLMISSRDPNALFSGGGISFLAGVRTVKFSYGYSSLKGKRATMEDYFETRISDVNGQMVAFFGVFDGHGGARTAEYLKNNLFKNLVSHDDFISDTKKAIVEVFKQTDEEYLIEEAGQPKNAGSTAATAFLIGDKLIVANVGDSRVVASRNGSAVPLSDDHKPDRSDERQRIEDAGGFIIWAGTWRVGGILAVSRAFGDKQLKPYVIAEPEIQEEDISTLEFIVVASDGLWNVLSNKDAVAIVRDISDAETAARKLVQEGYARGSCDNITCIVVRFEVS</sequence>
<name>P2C11_ARATH</name>
<reference key="1">
    <citation type="journal article" date="2000" name="Nature">
        <title>Sequence and analysis of chromosome 1 of the plant Arabidopsis thaliana.</title>
        <authorList>
            <person name="Theologis A."/>
            <person name="Ecker J.R."/>
            <person name="Palm C.J."/>
            <person name="Federspiel N.A."/>
            <person name="Kaul S."/>
            <person name="White O."/>
            <person name="Alonso J."/>
            <person name="Altafi H."/>
            <person name="Araujo R."/>
            <person name="Bowman C.L."/>
            <person name="Brooks S.Y."/>
            <person name="Buehler E."/>
            <person name="Chan A."/>
            <person name="Chao Q."/>
            <person name="Chen H."/>
            <person name="Cheuk R.F."/>
            <person name="Chin C.W."/>
            <person name="Chung M.K."/>
            <person name="Conn L."/>
            <person name="Conway A.B."/>
            <person name="Conway A.R."/>
            <person name="Creasy T.H."/>
            <person name="Dewar K."/>
            <person name="Dunn P."/>
            <person name="Etgu P."/>
            <person name="Feldblyum T.V."/>
            <person name="Feng J.-D."/>
            <person name="Fong B."/>
            <person name="Fujii C.Y."/>
            <person name="Gill J.E."/>
            <person name="Goldsmith A.D."/>
            <person name="Haas B."/>
            <person name="Hansen N.F."/>
            <person name="Hughes B."/>
            <person name="Huizar L."/>
            <person name="Hunter J.L."/>
            <person name="Jenkins J."/>
            <person name="Johnson-Hopson C."/>
            <person name="Khan S."/>
            <person name="Khaykin E."/>
            <person name="Kim C.J."/>
            <person name="Koo H.L."/>
            <person name="Kremenetskaia I."/>
            <person name="Kurtz D.B."/>
            <person name="Kwan A."/>
            <person name="Lam B."/>
            <person name="Langin-Hooper S."/>
            <person name="Lee A."/>
            <person name="Lee J.M."/>
            <person name="Lenz C.A."/>
            <person name="Li J.H."/>
            <person name="Li Y.-P."/>
            <person name="Lin X."/>
            <person name="Liu S.X."/>
            <person name="Liu Z.A."/>
            <person name="Luros J.S."/>
            <person name="Maiti R."/>
            <person name="Marziali A."/>
            <person name="Militscher J."/>
            <person name="Miranda M."/>
            <person name="Nguyen M."/>
            <person name="Nierman W.C."/>
            <person name="Osborne B.I."/>
            <person name="Pai G."/>
            <person name="Peterson J."/>
            <person name="Pham P.K."/>
            <person name="Rizzo M."/>
            <person name="Rooney T."/>
            <person name="Rowley D."/>
            <person name="Sakano H."/>
            <person name="Salzberg S.L."/>
            <person name="Schwartz J.R."/>
            <person name="Shinn P."/>
            <person name="Southwick A.M."/>
            <person name="Sun H."/>
            <person name="Tallon L.J."/>
            <person name="Tambunga G."/>
            <person name="Toriumi M.J."/>
            <person name="Town C.D."/>
            <person name="Utterback T."/>
            <person name="Van Aken S."/>
            <person name="Vaysberg M."/>
            <person name="Vysotskaia V.S."/>
            <person name="Walker M."/>
            <person name="Wu D."/>
            <person name="Yu G."/>
            <person name="Fraser C.M."/>
            <person name="Venter J.C."/>
            <person name="Davis R.W."/>
        </authorList>
    </citation>
    <scope>NUCLEOTIDE SEQUENCE [LARGE SCALE GENOMIC DNA]</scope>
    <source>
        <strain>cv. Columbia</strain>
    </source>
</reference>
<reference key="2">
    <citation type="journal article" date="2017" name="Plant J.">
        <title>Araport11: a complete reannotation of the Arabidopsis thaliana reference genome.</title>
        <authorList>
            <person name="Cheng C.Y."/>
            <person name="Krishnakumar V."/>
            <person name="Chan A.P."/>
            <person name="Thibaud-Nissen F."/>
            <person name="Schobel S."/>
            <person name="Town C.D."/>
        </authorList>
    </citation>
    <scope>GENOME REANNOTATION</scope>
    <source>
        <strain>cv. Columbia</strain>
    </source>
</reference>
<reference key="3">
    <citation type="journal article" date="2003" name="Science">
        <title>Empirical analysis of transcriptional activity in the Arabidopsis genome.</title>
        <authorList>
            <person name="Yamada K."/>
            <person name="Lim J."/>
            <person name="Dale J.M."/>
            <person name="Chen H."/>
            <person name="Shinn P."/>
            <person name="Palm C.J."/>
            <person name="Southwick A.M."/>
            <person name="Wu H.C."/>
            <person name="Kim C.J."/>
            <person name="Nguyen M."/>
            <person name="Pham P.K."/>
            <person name="Cheuk R.F."/>
            <person name="Karlin-Newmann G."/>
            <person name="Liu S.X."/>
            <person name="Lam B."/>
            <person name="Sakano H."/>
            <person name="Wu T."/>
            <person name="Yu G."/>
            <person name="Miranda M."/>
            <person name="Quach H.L."/>
            <person name="Tripp M."/>
            <person name="Chang C.H."/>
            <person name="Lee J.M."/>
            <person name="Toriumi M.J."/>
            <person name="Chan M.M."/>
            <person name="Tang C.C."/>
            <person name="Onodera C.S."/>
            <person name="Deng J.M."/>
            <person name="Akiyama K."/>
            <person name="Ansari Y."/>
            <person name="Arakawa T."/>
            <person name="Banh J."/>
            <person name="Banno F."/>
            <person name="Bowser L."/>
            <person name="Brooks S.Y."/>
            <person name="Carninci P."/>
            <person name="Chao Q."/>
            <person name="Choy N."/>
            <person name="Enju A."/>
            <person name="Goldsmith A.D."/>
            <person name="Gurjal M."/>
            <person name="Hansen N.F."/>
            <person name="Hayashizaki Y."/>
            <person name="Johnson-Hopson C."/>
            <person name="Hsuan V.W."/>
            <person name="Iida K."/>
            <person name="Karnes M."/>
            <person name="Khan S."/>
            <person name="Koesema E."/>
            <person name="Ishida J."/>
            <person name="Jiang P.X."/>
            <person name="Jones T."/>
            <person name="Kawai J."/>
            <person name="Kamiya A."/>
            <person name="Meyers C."/>
            <person name="Nakajima M."/>
            <person name="Narusaka M."/>
            <person name="Seki M."/>
            <person name="Sakurai T."/>
            <person name="Satou M."/>
            <person name="Tamse R."/>
            <person name="Vaysberg M."/>
            <person name="Wallender E.K."/>
            <person name="Wong C."/>
            <person name="Yamamura Y."/>
            <person name="Yuan S."/>
            <person name="Shinozaki K."/>
            <person name="Davis R.W."/>
            <person name="Theologis A."/>
            <person name="Ecker J.R."/>
        </authorList>
    </citation>
    <scope>NUCLEOTIDE SEQUENCE [LARGE SCALE MRNA]</scope>
    <source>
        <strain>cv. Columbia</strain>
    </source>
</reference>
<reference key="4">
    <citation type="journal article" date="2008" name="BMC Genomics">
        <title>Genome-wide and expression analysis of protein phosphatase 2C in rice and Arabidopsis.</title>
        <authorList>
            <person name="Xue T."/>
            <person name="Wang D."/>
            <person name="Zhang S."/>
            <person name="Ehlting J."/>
            <person name="Ni F."/>
            <person name="Jacab S."/>
            <person name="Zheng C."/>
            <person name="Zhong Y."/>
        </authorList>
    </citation>
    <scope>GENE FAMILY</scope>
    <scope>NOMENCLATURE</scope>
</reference>